<keyword id="KW-0238">DNA-binding</keyword>
<keyword id="KW-1185">Reference proteome</keyword>
<keyword id="KW-0804">Transcription</keyword>
<keyword id="KW-0805">Transcription regulation</keyword>
<organism>
    <name type="scientific">Mycobacterium bovis (strain ATCC BAA-935 / AF2122/97)</name>
    <dbReference type="NCBI Taxonomy" id="233413"/>
    <lineage>
        <taxon>Bacteria</taxon>
        <taxon>Bacillati</taxon>
        <taxon>Actinomycetota</taxon>
        <taxon>Actinomycetes</taxon>
        <taxon>Mycobacteriales</taxon>
        <taxon>Mycobacteriaceae</taxon>
        <taxon>Mycobacterium</taxon>
        <taxon>Mycobacterium tuberculosis complex</taxon>
    </lineage>
</organism>
<evidence type="ECO:0000250" key="1">
    <source>
        <dbReference type="UniProtKB" id="P9WMF1"/>
    </source>
</evidence>
<evidence type="ECO:0000255" key="2">
    <source>
        <dbReference type="PROSITE-ProRule" id="PRU00345"/>
    </source>
</evidence>
<reference key="1">
    <citation type="journal article" date="2003" name="Proc. Natl. Acad. Sci. U.S.A.">
        <title>The complete genome sequence of Mycobacterium bovis.</title>
        <authorList>
            <person name="Garnier T."/>
            <person name="Eiglmeier K."/>
            <person name="Camus J.-C."/>
            <person name="Medina N."/>
            <person name="Mansoor H."/>
            <person name="Pryor M."/>
            <person name="Duthoy S."/>
            <person name="Grondin S."/>
            <person name="Lacroix C."/>
            <person name="Monsempe C."/>
            <person name="Simon S."/>
            <person name="Harris B."/>
            <person name="Atkin R."/>
            <person name="Doggett J."/>
            <person name="Mayes R."/>
            <person name="Keating L."/>
            <person name="Wheeler P.R."/>
            <person name="Parkhill J."/>
            <person name="Barrell B.G."/>
            <person name="Cole S.T."/>
            <person name="Gordon S.V."/>
            <person name="Hewinson R.G."/>
        </authorList>
    </citation>
    <scope>NUCLEOTIDE SEQUENCE [LARGE SCALE GENOMIC DNA]</scope>
    <source>
        <strain>ATCC BAA-935 / AF2122/97</strain>
    </source>
</reference>
<reference key="2">
    <citation type="journal article" date="2017" name="Genome Announc.">
        <title>Updated reference genome sequence and annotation of Mycobacterium bovis AF2122/97.</title>
        <authorList>
            <person name="Malone K.M."/>
            <person name="Farrell D."/>
            <person name="Stuber T.P."/>
            <person name="Schubert O.T."/>
            <person name="Aebersold R."/>
            <person name="Robbe-Austerman S."/>
            <person name="Gordon S.V."/>
        </authorList>
    </citation>
    <scope>NUCLEOTIDE SEQUENCE [LARGE SCALE GENOMIC DNA]</scope>
    <scope>GENOME REANNOTATION</scope>
    <source>
        <strain>ATCC BAA-935 / AF2122/97</strain>
    </source>
</reference>
<feature type="chain" id="PRO_0000054408" description="Uncharacterized HTH-type transcriptional regulator Mb0904">
    <location>
        <begin position="1"/>
        <end position="143"/>
    </location>
</feature>
<feature type="domain" description="HTH marR-type" evidence="2">
    <location>
        <begin position="5"/>
        <end position="137"/>
    </location>
</feature>
<feature type="DNA-binding region" description="H-T-H motif" evidence="2">
    <location>
        <begin position="51"/>
        <end position="74"/>
    </location>
</feature>
<protein>
    <recommendedName>
        <fullName>Uncharacterized HTH-type transcriptional regulator Mb0904</fullName>
    </recommendedName>
</protein>
<accession>P67746</accession>
<accession>A0A1R3XYT0</accession>
<accession>Q10542</accession>
<accession>X2BGB0</accession>
<dbReference type="EMBL" id="LT708304">
    <property type="protein sequence ID" value="SIT99502.1"/>
    <property type="molecule type" value="Genomic_DNA"/>
</dbReference>
<dbReference type="RefSeq" id="NP_854561.1">
    <property type="nucleotide sequence ID" value="NC_002945.3"/>
</dbReference>
<dbReference type="RefSeq" id="WP_003404606.1">
    <property type="nucleotide sequence ID" value="NC_002945.4"/>
</dbReference>
<dbReference type="SMR" id="P67746"/>
<dbReference type="KEGG" id="mbo:BQ2027_MB0904"/>
<dbReference type="PATRIC" id="fig|233413.5.peg.984"/>
<dbReference type="Proteomes" id="UP000001419">
    <property type="component" value="Chromosome"/>
</dbReference>
<dbReference type="GO" id="GO:0003677">
    <property type="term" value="F:DNA binding"/>
    <property type="evidence" value="ECO:0007669"/>
    <property type="project" value="UniProtKB-KW"/>
</dbReference>
<dbReference type="GO" id="GO:0003700">
    <property type="term" value="F:DNA-binding transcription factor activity"/>
    <property type="evidence" value="ECO:0007669"/>
    <property type="project" value="InterPro"/>
</dbReference>
<dbReference type="Gene3D" id="1.10.10.10">
    <property type="entry name" value="Winged helix-like DNA-binding domain superfamily/Winged helix DNA-binding domain"/>
    <property type="match status" value="1"/>
</dbReference>
<dbReference type="InterPro" id="IPR052526">
    <property type="entry name" value="HTH-type_Bedaq_tolerance"/>
</dbReference>
<dbReference type="InterPro" id="IPR000835">
    <property type="entry name" value="HTH_MarR-typ"/>
</dbReference>
<dbReference type="InterPro" id="IPR023187">
    <property type="entry name" value="Tscrpt_reg_MarR-type_CS"/>
</dbReference>
<dbReference type="InterPro" id="IPR036388">
    <property type="entry name" value="WH-like_DNA-bd_sf"/>
</dbReference>
<dbReference type="InterPro" id="IPR036390">
    <property type="entry name" value="WH_DNA-bd_sf"/>
</dbReference>
<dbReference type="PANTHER" id="PTHR39515">
    <property type="entry name" value="CONSERVED PROTEIN"/>
    <property type="match status" value="1"/>
</dbReference>
<dbReference type="PANTHER" id="PTHR39515:SF2">
    <property type="entry name" value="HTH-TYPE TRANSCRIPTIONAL REGULATOR RV0880"/>
    <property type="match status" value="1"/>
</dbReference>
<dbReference type="Pfam" id="PF01047">
    <property type="entry name" value="MarR"/>
    <property type="match status" value="1"/>
</dbReference>
<dbReference type="SMART" id="SM00347">
    <property type="entry name" value="HTH_MARR"/>
    <property type="match status" value="1"/>
</dbReference>
<dbReference type="SUPFAM" id="SSF46785">
    <property type="entry name" value="Winged helix' DNA-binding domain"/>
    <property type="match status" value="1"/>
</dbReference>
<dbReference type="PROSITE" id="PS01117">
    <property type="entry name" value="HTH_MARR_1"/>
    <property type="match status" value="1"/>
</dbReference>
<dbReference type="PROSITE" id="PS50995">
    <property type="entry name" value="HTH_MARR_2"/>
    <property type="match status" value="1"/>
</dbReference>
<comment type="subunit">
    <text evidence="1">Homodimer.</text>
</comment>
<name>Y904_MYCBO</name>
<sequence length="143" mass="15576">MLDSDARLASDLSLAVMRLSRQLRFRNPSSPVSLSQLSALTTLANEGAMTPGALAIRERVRPPSMTRVIASLADMGFVDRAPHPIDGRQVLVSVSESGAELVKAARRARQEWLAERLATLNRSERDILRSAADLMLALVDESP</sequence>
<proteinExistence type="inferred from homology"/>
<gene>
    <name type="ordered locus">BQ2027_MB0904</name>
</gene>